<gene>
    <name type="ordered locus">KPK_0377</name>
</gene>
<dbReference type="EMBL" id="CP000964">
    <property type="protein sequence ID" value="ACI09115.1"/>
    <property type="molecule type" value="Genomic_DNA"/>
</dbReference>
<dbReference type="SMR" id="B5XN72"/>
<dbReference type="KEGG" id="kpe:KPK_0377"/>
<dbReference type="HOGENOM" id="CLU_186759_1_0_6"/>
<dbReference type="BioCyc" id="KPNE507522:GI0B-377-MONOMER"/>
<dbReference type="Proteomes" id="UP000001734">
    <property type="component" value="Chromosome"/>
</dbReference>
<dbReference type="Gene3D" id="1.10.10.610">
    <property type="entry name" value="YehU-like"/>
    <property type="match status" value="1"/>
</dbReference>
<dbReference type="HAMAP" id="MF_00690">
    <property type="entry name" value="UPF0270"/>
    <property type="match status" value="1"/>
</dbReference>
<dbReference type="InterPro" id="IPR010648">
    <property type="entry name" value="UPF0270"/>
</dbReference>
<dbReference type="InterPro" id="IPR036685">
    <property type="entry name" value="YehU-like_sf"/>
</dbReference>
<dbReference type="NCBIfam" id="NF003438">
    <property type="entry name" value="PRK04966.1"/>
    <property type="match status" value="1"/>
</dbReference>
<dbReference type="Pfam" id="PF06794">
    <property type="entry name" value="UPF0270"/>
    <property type="match status" value="1"/>
</dbReference>
<dbReference type="PIRSF" id="PIRSF006169">
    <property type="entry name" value="UCP006169"/>
    <property type="match status" value="1"/>
</dbReference>
<dbReference type="SUPFAM" id="SSF118001">
    <property type="entry name" value="YehU-like"/>
    <property type="match status" value="1"/>
</dbReference>
<reference key="1">
    <citation type="journal article" date="2008" name="PLoS Genet.">
        <title>Complete genome sequence of the N2-fixing broad host range endophyte Klebsiella pneumoniae 342 and virulence predictions verified in mice.</title>
        <authorList>
            <person name="Fouts D.E."/>
            <person name="Tyler H.L."/>
            <person name="DeBoy R.T."/>
            <person name="Daugherty S."/>
            <person name="Ren Q."/>
            <person name="Badger J.H."/>
            <person name="Durkin A.S."/>
            <person name="Huot H."/>
            <person name="Shrivastava S."/>
            <person name="Kothari S."/>
            <person name="Dodson R.J."/>
            <person name="Mohamoud Y."/>
            <person name="Khouri H."/>
            <person name="Roesch L.F.W."/>
            <person name="Krogfelt K.A."/>
            <person name="Struve C."/>
            <person name="Triplett E.W."/>
            <person name="Methe B.A."/>
        </authorList>
    </citation>
    <scope>NUCLEOTIDE SEQUENCE [LARGE SCALE GENOMIC DNA]</scope>
    <source>
        <strain>342</strain>
    </source>
</reference>
<organism>
    <name type="scientific">Klebsiella pneumoniae (strain 342)</name>
    <dbReference type="NCBI Taxonomy" id="507522"/>
    <lineage>
        <taxon>Bacteria</taxon>
        <taxon>Pseudomonadati</taxon>
        <taxon>Pseudomonadota</taxon>
        <taxon>Gammaproteobacteria</taxon>
        <taxon>Enterobacterales</taxon>
        <taxon>Enterobacteriaceae</taxon>
        <taxon>Klebsiella/Raoultella group</taxon>
        <taxon>Klebsiella</taxon>
        <taxon>Klebsiella pneumoniae complex</taxon>
    </lineage>
</organism>
<comment type="similarity">
    <text evidence="1">Belongs to the UPF0270 family.</text>
</comment>
<name>Y377_KLEP3</name>
<accession>B5XN72</accession>
<feature type="chain" id="PRO_1000132016" description="UPF0270 protein KPK_0377">
    <location>
        <begin position="1"/>
        <end position="72"/>
    </location>
</feature>
<evidence type="ECO:0000255" key="1">
    <source>
        <dbReference type="HAMAP-Rule" id="MF_00690"/>
    </source>
</evidence>
<protein>
    <recommendedName>
        <fullName evidence="1">UPF0270 protein KPK_0377</fullName>
    </recommendedName>
</protein>
<proteinExistence type="inferred from homology"/>
<sequence length="72" mass="8278">MIIPWQDLDPETLDNLIESFVLREGTDYGEHERSLADKVADVKQQLKRGEAVLVWSELHETVNIMPRALFNG</sequence>